<name>PA2BA_VIPAA</name>
<evidence type="ECO:0000250" key="1">
    <source>
        <dbReference type="UniProtKB" id="P14418"/>
    </source>
</evidence>
<evidence type="ECO:0000250" key="2">
    <source>
        <dbReference type="UniProtKB" id="P59071"/>
    </source>
</evidence>
<evidence type="ECO:0000255" key="3">
    <source>
        <dbReference type="PROSITE-ProRule" id="PRU10035"/>
    </source>
</evidence>
<evidence type="ECO:0000255" key="4">
    <source>
        <dbReference type="PROSITE-ProRule" id="PRU10036"/>
    </source>
</evidence>
<evidence type="ECO:0000269" key="5">
    <source>
    </source>
</evidence>
<evidence type="ECO:0000269" key="6">
    <source>
    </source>
</evidence>
<evidence type="ECO:0000269" key="7">
    <source>
    </source>
</evidence>
<evidence type="ECO:0000269" key="8">
    <source>
    </source>
</evidence>
<evidence type="ECO:0000269" key="9">
    <source>
    </source>
</evidence>
<evidence type="ECO:0000269" key="10">
    <source>
    </source>
</evidence>
<evidence type="ECO:0000269" key="11">
    <source>
    </source>
</evidence>
<evidence type="ECO:0000269" key="12">
    <source>
    </source>
</evidence>
<evidence type="ECO:0000269" key="13">
    <source>
    </source>
</evidence>
<evidence type="ECO:0000269" key="14">
    <source>
    </source>
</evidence>
<evidence type="ECO:0000269" key="15">
    <source>
    </source>
</evidence>
<evidence type="ECO:0000269" key="16">
    <source>
    </source>
</evidence>
<evidence type="ECO:0000269" key="17">
    <source>
    </source>
</evidence>
<evidence type="ECO:0000269" key="18">
    <source>
    </source>
</evidence>
<evidence type="ECO:0000305" key="19"/>
<evidence type="ECO:0000305" key="20">
    <source>
    </source>
</evidence>
<evidence type="ECO:0007744" key="21">
    <source>
        <dbReference type="PDB" id="3G8G"/>
    </source>
</evidence>
<evidence type="ECO:0007829" key="22">
    <source>
        <dbReference type="PDB" id="3G8G"/>
    </source>
</evidence>
<protein>
    <recommendedName>
        <fullName>Basic phospholipase A2 ammodytoxin A</fullName>
        <shortName>AtxA</shortName>
        <shortName>svPLA2</shortName>
        <ecNumber>3.1.1.4</ecNumber>
    </recommendedName>
    <alternativeName>
        <fullName>Phosphatidylcholine 2-acylhydrolase</fullName>
    </alternativeName>
</protein>
<keyword id="KW-0002">3D-structure</keyword>
<keyword id="KW-1203">Blood coagulation cascade inhibiting toxin</keyword>
<keyword id="KW-0106">Calcium</keyword>
<keyword id="KW-0903">Direct protein sequencing</keyword>
<keyword id="KW-1015">Disulfide bond</keyword>
<keyword id="KW-1199">Hemostasis impairing toxin</keyword>
<keyword id="KW-1035">Host cytoplasm</keyword>
<keyword id="KW-0378">Hydrolase</keyword>
<keyword id="KW-0442">Lipid degradation</keyword>
<keyword id="KW-0443">Lipid metabolism</keyword>
<keyword id="KW-0479">Metal-binding</keyword>
<keyword id="KW-0528">Neurotoxin</keyword>
<keyword id="KW-0638">Presynaptic neurotoxin</keyword>
<keyword id="KW-0964">Secreted</keyword>
<keyword id="KW-0732">Signal</keyword>
<keyword id="KW-0800">Toxin</keyword>
<sequence>MRTLWIVAVCLIGVEGSLLEFGMMILGETGKNPLTSYSFYGCYCGVGGKGTPKDATDRCCFVHDCCYGNLPDCSPKTDRYKYHRENGAIVCGKGTSCENRICECDRAAAICFRKNLKTYNYIYRNYPDFLCKKESEKC</sequence>
<comment type="function">
    <text evidence="8 11 13 15 18">Snake venom phospholipase A2 (PLA2) that acts as a presynaptic neurotoxin, an inhibitor of blood coagulation, and has been found to bind with high affinity to intracellular proteins. The response of indirectly stimulated neuromuscular preparations to ammodytoxin (Atx) is triphasic. The first phase, the transient inhibition of the acetylcholine (ACh) release, starts soon after the addition of Atx and lasts for several minutes. This phase is probably independent of Atx enzymatic activity. The effect may be due to the specific binding of the toxin to presynaptic receptors. These receptors, called N-type receptors, are still unidentified. It is noteworthy that a neuronal isoform of the M-type PLA2 receptor (R180) has been identified as a high-affinity receptor for Atx in neuronal plasma membranes. It was demonstrated however that this receptor is not essential for expression of neurotoxicity by Atx. The second phase corresponds to an augmentation of neurotransmitter release. A peak is reached 10-20 minutes after exposure of the preparation to Atx and is followed by a gradual reduction. In this phase, the enzymatic activity of Atx of the mammalian is not significant. It is speculated that the increased release of neurotransmitter in this phase is induced by the interference of Atx with voltage-gated potassium channels. Measurements of ionic currents showed however that voltage-gated potassium channels are not affected by Atx. The third phase of the response of neuromuscular preparations to Atx, which corresponds to a complete and irreversible paralysis, is clearly dependent on the hydrolytic activity of the toxin. In addition to its presynaptic neurotoxicity, Atx shows an anticoagulant activity by binding with high affinity to activated coagulation factor X (F10) thus inhibiting the formation of the prothrombinase complex (FX/FV) and its activity (IC(50) is 20 nM). Surprisingly, Atx was discovered to bind intracellular proteins such as calmodulin (CaM) (IC(50) is 6 nM), 14-3-3 proteins gamma (YWHAG) and epsilon (YWHAE) (by similarity with AtxC), as well as R25 (by similarity with AtxC), a mitochondrial integral membrane protein found in cerebral cortex. These findings raised a doubt about the dogma of the exclusively extracellular action of PLA2s, defended by the potential instability of these molecules in the reducing environment of the eukaryotic cytosol coupled with their possible inability to act as enzymes in this cellular compartment, due to too low concentration of calcium ions. This hypothesis was challenged efficiently by demonstrating the internalization of AtxA into a culture cells, but still remains to be directly demonstrated in vivo. PLA2 catalyzes the calcium-dependent hydrolysis of the 2-acyl groups in 3-sn-phosphoglycerides.</text>
</comment>
<comment type="catalytic activity">
    <reaction evidence="3 4 6 9 12 14">
        <text>a 1,2-diacyl-sn-glycero-3-phosphocholine + H2O = a 1-acyl-sn-glycero-3-phosphocholine + a fatty acid + H(+)</text>
        <dbReference type="Rhea" id="RHEA:15801"/>
        <dbReference type="ChEBI" id="CHEBI:15377"/>
        <dbReference type="ChEBI" id="CHEBI:15378"/>
        <dbReference type="ChEBI" id="CHEBI:28868"/>
        <dbReference type="ChEBI" id="CHEBI:57643"/>
        <dbReference type="ChEBI" id="CHEBI:58168"/>
        <dbReference type="EC" id="3.1.1.4"/>
    </reaction>
</comment>
<comment type="cofactor">
    <cofactor evidence="14">
        <name>Ca(2+)</name>
        <dbReference type="ChEBI" id="CHEBI:29108"/>
    </cofactor>
    <text evidence="14">Binds 1 Ca(2+) ion.</text>
</comment>
<comment type="subunit">
    <text>Monomer. Binds to calmodulin, coagulation factor X (F10), M-type PLA2 receptor (R-180). May also bind to 14-3-3 proteins gamma (YWHAG) and epsilon (YWHAE), and R25, a mitochondrial membrane protein.</text>
</comment>
<comment type="subcellular location">
    <subcellularLocation>
        <location evidence="16">Secreted</location>
    </subcellularLocation>
    <subcellularLocation>
        <location evidence="16">Host cytoplasm</location>
        <location evidence="16">Host cytosol</location>
    </subcellularLocation>
</comment>
<comment type="tissue specificity">
    <text>Expressed by the venom gland.</text>
</comment>
<comment type="toxic dose">
    <text evidence="5 9 12">LD(50) is 0.021 mg/kg by intravenous injection into mice.</text>
</comment>
<comment type="miscellaneous">
    <text evidence="20">Negative results: does not affect mKv1.1/KCNA1, rKv1.2/KCNA2, mKv1.3/KCNA3, hKv1.5/KCNA5 and mKv3.1/KCNC1 voltage-gated potassium channels.</text>
</comment>
<comment type="similarity">
    <text evidence="19">Belongs to the phospholipase A2 family. Group II subfamily. D49 sub-subfamily.</text>
</comment>
<accession>P00626</accession>
<feature type="signal peptide" evidence="18">
    <location>
        <begin position="1"/>
        <end position="16"/>
    </location>
</feature>
<feature type="chain" id="PRO_0000022970" description="Basic phospholipase A2 ammodytoxin A" evidence="18">
    <location>
        <begin position="17"/>
        <end position="138"/>
    </location>
</feature>
<feature type="active site" evidence="1">
    <location>
        <position position="63"/>
    </location>
</feature>
<feature type="active site" evidence="1">
    <location>
        <position position="105"/>
    </location>
</feature>
<feature type="binding site" evidence="2">
    <location>
        <position position="43"/>
    </location>
    <ligand>
        <name>Ca(2+)</name>
        <dbReference type="ChEBI" id="CHEBI:29108"/>
    </ligand>
</feature>
<feature type="binding site" evidence="2">
    <location>
        <position position="45"/>
    </location>
    <ligand>
        <name>Ca(2+)</name>
        <dbReference type="ChEBI" id="CHEBI:29108"/>
    </ligand>
</feature>
<feature type="binding site" evidence="2">
    <location>
        <position position="47"/>
    </location>
    <ligand>
        <name>Ca(2+)</name>
        <dbReference type="ChEBI" id="CHEBI:29108"/>
    </ligand>
</feature>
<feature type="binding site" evidence="2">
    <location>
        <position position="64"/>
    </location>
    <ligand>
        <name>Ca(2+)</name>
        <dbReference type="ChEBI" id="CHEBI:29108"/>
    </ligand>
</feature>
<feature type="site" description="Putative membrane binding site">
    <location>
        <position position="18"/>
    </location>
</feature>
<feature type="site" description="Putative membrane binding site">
    <location>
        <position position="19"/>
    </location>
</feature>
<feature type="site" description="Putative membrane binding site">
    <location>
        <position position="34"/>
    </location>
</feature>
<feature type="site" description="Putative membrane binding site">
    <location>
        <position position="35"/>
    </location>
</feature>
<feature type="site" description="Putative membrane binding site">
    <location>
        <position position="39"/>
    </location>
</feature>
<feature type="site" description="Putative membrane binding site">
    <location>
        <position position="46"/>
    </location>
</feature>
<feature type="site" description="Putative membrane binding site">
    <location>
        <position position="76"/>
    </location>
</feature>
<feature type="site" description="Putative membrane binding site">
    <location>
        <position position="77"/>
    </location>
</feature>
<feature type="site" description="Putative membrane binding site">
    <location>
        <position position="79"/>
    </location>
</feature>
<feature type="site" description="Putative membrane binding site">
    <location>
        <position position="82"/>
    </location>
</feature>
<feature type="site" description="Putative membrane binding site">
    <location>
        <position position="124"/>
    </location>
</feature>
<feature type="site" description="Putative membrane binding site">
    <location>
        <position position="125"/>
    </location>
</feature>
<feature type="site" description="Putative membrane binding site">
    <location>
        <position position="129"/>
    </location>
</feature>
<feature type="disulfide bond" evidence="17 21">
    <location>
        <begin position="42"/>
        <end position="131"/>
    </location>
</feature>
<feature type="disulfide bond" evidence="17 21">
    <location>
        <begin position="44"/>
        <end position="60"/>
    </location>
</feature>
<feature type="disulfide bond" evidence="17 21">
    <location>
        <begin position="59"/>
        <end position="111"/>
    </location>
</feature>
<feature type="disulfide bond" evidence="17 21">
    <location>
        <begin position="65"/>
        <end position="138"/>
    </location>
</feature>
<feature type="disulfide bond" evidence="17 21">
    <location>
        <begin position="66"/>
        <end position="104"/>
    </location>
</feature>
<feature type="disulfide bond" evidence="17 21">
    <location>
        <begin position="73"/>
        <end position="97"/>
    </location>
</feature>
<feature type="disulfide bond" evidence="17 21">
    <location>
        <begin position="91"/>
        <end position="102"/>
    </location>
</feature>
<feature type="mutagenesis site" description="Is 4-fold less toxic than wild-type AtxA, is similarly enzymatically active on anionic POPG vesicles and 3.2-fold less active on zwitterionic POPC vesicles." evidence="9 14">
    <original>F</original>
    <variation>A</variation>
    <location>
        <position position="39"/>
    </location>
</feature>
<feature type="mutagenesis site" description="Is 130-fold less toxic than wild-type AtxA, is similarly enzymatically active on anionic POPG vesicles and 3.5-fold less active on zwitterionic POPC vesicles." evidence="9 14">
    <original>F</original>
    <variation>N</variation>
    <location>
        <position position="39"/>
    </location>
</feature>
<feature type="mutagenesis site" description="Is 18-fold less toxic than wild-type AtxA, is similarly enzymatically active on anionic POPG vesicles and 5.4-fold less active on zwitterionic POPC vesicles." evidence="9 14">
    <original>F</original>
    <variation>S</variation>
    <location>
        <position position="39"/>
    </location>
</feature>
<feature type="mutagenesis site" description="Is 8-fold less toxic than wild-type AtxA, is similarly enzymatically active on anionic POPG vesicles and on zwitterionic POPC vesicles." evidence="9 14">
    <original>F</original>
    <variation>W</variation>
    <location>
        <position position="39"/>
    </location>
</feature>
<feature type="mutagenesis site" description="Is 16-fold less toxic than wild-type AtxA, is similarly enzymatically active on anionic POPG vesicles and on zwitterionic POPC vesicles." evidence="9 14">
    <original>F</original>
    <variation>Y</variation>
    <location>
        <position position="39"/>
    </location>
</feature>
<feature type="mutagenesis site" description="Is 6-fold less toxic than wild-type AtxA, has 2-fold higher enzymatic activity on anionic POPG vesicles and 27-fold more active on zwitterionic POPC vesicles." evidence="14">
    <original>V</original>
    <variation>W</variation>
    <location>
        <position position="46"/>
    </location>
</feature>
<feature type="mutagenesis site" description="Is 4-fold less toxic than wild-type AtxA, has 2.5-fold lower enzymatic activity on anionic POPG vesicles and 6-fold on zwitterionic POPC vesicles, and has 8.5-fold lower activity in inhibiting prothrombinase activity." evidence="12 13">
    <original>R</original>
    <variation>E</variation>
    <location>
        <position position="79"/>
    </location>
</feature>
<feature type="mutagenesis site" description="Is 1.5-fold less toxic than wild-type AtxA, and has 1.5-fold higher enzymatic activity on anionic POPG and 3.5-fold on zwitterionic POPC vesicles." evidence="12 13">
    <original>R</original>
    <variation>I</variation>
    <location>
        <position position="79"/>
    </location>
</feature>
<feature type="mutagenesis site" description="Is 2.4-fold less toxic than wild-type AtxA, and has 1.6-fold lower enzymatic activity on anionic POPG vesicles and 1.6-fold on zwitterionic POPC vesicles." evidence="12 13">
    <original>R</original>
    <variation>K</variation>
    <location>
        <position position="79"/>
    </location>
</feature>
<feature type="mutagenesis site" description="Is 2.6-fold less toxic than wild-type AtxA, has 1.4-fold lower enzymatic activity on anionic POPG vesicles and 1.2-fold on zwitterionic POPC vesicles, and has 3.5-fold lower activity in inhibiting prothrombinase activity." evidence="12 13">
    <original>R</original>
    <variation>S</variation>
    <location>
        <position position="79"/>
    </location>
</feature>
<feature type="mutagenesis site" description="Is 13-fold less toxic than wild-type AtxA, has 1.2-fold lower enzymatic activity on anionic POPG vesicles and 1.7-fold on zwitterionic POPC vesicles, and has 19-fold lower activity in inhibiting prothrombinase activity." evidence="12 13">
    <original>KYHR</original>
    <variation>SYSL</variation>
    <location>
        <begin position="81"/>
        <end position="84"/>
    </location>
</feature>
<feature type="mutagenesis site" description="Is 1.1-fold less toxic than wild-type AtxA, and has 1.3-fold lower enzymatic activity on anionic POPG vesicles and 1.4-fold on zwitterionic POPC vesicles." evidence="12">
    <original>K</original>
    <variation>A</variation>
    <location>
        <position position="93"/>
    </location>
</feature>
<feature type="mutagenesis site" description="Is 1.5-fold less toxic than wild-type AtxA, and has 1.1-fold lower enzymatic activity on anionic POPG vesicles and 1.2-fold on zwitterionic POPC vesicles." evidence="12">
    <original>K</original>
    <variation>E</variation>
    <location>
        <position position="93"/>
    </location>
</feature>
<feature type="mutagenesis site" description="Is 1.6-fold less toxic than wild-type AtxA, and has 1.1-fold lower enzymatic activity on anionic POPG vesicles and 1.7-fold on zwitterionic POPC vesicles." evidence="12">
    <original>K</original>
    <variation>G</variation>
    <location>
        <position position="93"/>
    </location>
</feature>
<feature type="mutagenesis site" description="Is 1.5-fold less toxic than wild-type AtxA, and is similarly enzymatically active on anionic POPG vesicles and 1.4-fold less active on zwitterionic POPC vesicles." evidence="12">
    <original>K</original>
    <variation>R</variation>
    <location>
        <position position="93"/>
    </location>
</feature>
<feature type="mutagenesis site" description="Is 3-fold less toxic (by intraperitoneal injection) than wild-type AtxA (by intravenous injection), has 1.6-fold higher enzymatic activity, has 2.8-fold lower binding affinity for CaM, and has similar binding affinity for bovine brain receptor; when associated with N-117." evidence="5 7 10 13">
    <original>K</original>
    <variation>N</variation>
    <location>
        <position position="114"/>
    </location>
</feature>
<feature type="mutagenesis site" description="Is 30-fold less toxic than wild-type AtxA, has 3-fold higher enzymatic activity, has 20-fold lower activity in inhibiting prothrombinase activity, and has 4.5-fold lower binding affinity to CaM; when associated with N-117 and 132-T--E-137." evidence="5 7 10 13">
    <original>K</original>
    <variation>N</variation>
    <location>
        <position position="114"/>
    </location>
</feature>
<feature type="mutagenesis site" description="Is 3-fold less toxic (by intraperitoneal injection) than wild-type AtxA (by intravenous injection), has 1.6-fold higher enzymatic activity, has 2.8-fold lower binding affinity for CaM, and has similar binding affinity for bovine brain receptor; when associated with N-114." evidence="5 7 10 13">
    <original>K</original>
    <variation>N</variation>
    <location>
        <position position="117"/>
    </location>
</feature>
<feature type="mutagenesis site" description="Is 30-fold less toxic than wild-type AtxA, has 3-fold higher enzymatic activity, has 20-fold lower activity in inhibiting prothrombinase activity, and has 4.5-fold lower binding affinity to CaM; when associated with N-114 and 132-T--E-137." evidence="5 7 10 13">
    <original>K</original>
    <variation>N</variation>
    <location>
        <position position="117"/>
    </location>
</feature>
<feature type="mutagenesis site" description="Is &gt;200-fold less toxic than wild-type AtxA, is similarly enzymatically active on anionic POPG vesicles, and 5-fold more active on zwitterionic POPC vesicles, has 3.5-fold lower activity in inhibiting prothrombinase activity, and has 8.3-fold lower binding affinity for CaM." evidence="6 10 13 14">
    <original>YIYRN</original>
    <variation>KKYML</variation>
    <location>
        <begin position="121"/>
        <end position="125"/>
    </location>
</feature>
<feature type="mutagenesis site" description="Is &lt;200-fold less toxic than wild-type AtxA, has 2-fold lower enzymatic activity (on phosphatidylcholine micelle), and has 3.5-fold lower binding affinity for CaM." evidence="6 10">
    <original>YI</original>
    <variation>KK</variation>
    <location>
        <begin position="121"/>
        <end position="122"/>
    </location>
</feature>
<feature type="mutagenesis site" description="Is 30-fold less toxic than wild-type AtxA, has 3-fold higher enzymatic activity, has 20-fold lower activity in inhibiting prothrombinase activity, and has 4.5-fold lower binding affinity for CaM; when associated with N-114 and N-117." evidence="7 10 13">
    <original>KKESEK</original>
    <variation>TETSEE</variation>
    <location>
        <begin position="132"/>
        <end position="137"/>
    </location>
</feature>
<feature type="mutagenesis site" description="Is 2-fold less toxic than wild-type AtxA, has slight lower enzymatic activity, has 7-fold lower activity in inhibiting prothrombinase activity and has 3.3-fold lower binding affinity to CaM." evidence="13">
    <original>K</original>
    <variation>T</variation>
    <location>
        <position position="132"/>
    </location>
</feature>
<feature type="mutagenesis site" description="Is 2-fold less toxic (by intraperitoneal injection) than wild-type AtxA (by intravenous injection), has similar enzymatic activity, has a slightly weaker binding affinity for bovine brain receptor, has 13-fold lower activity in inhibiting prothrombinase activity, and has 2.3-fold lower binding affinity for CaM." evidence="5 13">
    <original>K</original>
    <variation>E</variation>
    <location>
        <position position="133"/>
    </location>
</feature>
<feature type="helix" evidence="22">
    <location>
        <begin position="18"/>
        <end position="29"/>
    </location>
</feature>
<feature type="helix" evidence="22">
    <location>
        <begin position="33"/>
        <end position="36"/>
    </location>
</feature>
<feature type="strand" evidence="22">
    <location>
        <begin position="37"/>
        <end position="40"/>
    </location>
</feature>
<feature type="turn" evidence="22">
    <location>
        <begin position="41"/>
        <end position="43"/>
    </location>
</feature>
<feature type="strand" evidence="22">
    <location>
        <begin position="44"/>
        <end position="47"/>
    </location>
</feature>
<feature type="helix" evidence="22">
    <location>
        <begin position="55"/>
        <end position="68"/>
    </location>
</feature>
<feature type="turn" evidence="22">
    <location>
        <begin position="75"/>
        <end position="77"/>
    </location>
</feature>
<feature type="strand" evidence="22">
    <location>
        <begin position="82"/>
        <end position="85"/>
    </location>
</feature>
<feature type="strand" evidence="22">
    <location>
        <begin position="88"/>
        <end position="91"/>
    </location>
</feature>
<feature type="helix" evidence="22">
    <location>
        <begin position="96"/>
        <end position="114"/>
    </location>
</feature>
<feature type="helix" evidence="22">
    <location>
        <begin position="115"/>
        <end position="118"/>
    </location>
</feature>
<feature type="helix" evidence="22">
    <location>
        <begin position="121"/>
        <end position="123"/>
    </location>
</feature>
<feature type="helix" evidence="22">
    <location>
        <begin position="128"/>
        <end position="131"/>
    </location>
</feature>
<proteinExistence type="evidence at protein level"/>
<reference key="1">
    <citation type="journal article" date="1991" name="Toxicon">
        <title>Cloning and nucleotide sequence of a cDNA encoding ammodytoxin A, the most toxic phospholipase A2 from the venom of long-nosed viper (Vipera ammodytes).</title>
        <authorList>
            <person name="Pungercar J."/>
            <person name="Kordis D."/>
            <person name="Strukelj B."/>
            <person name="Liang N.-S."/>
            <person name="Gubensek F."/>
        </authorList>
    </citation>
    <scope>NUCLEOTIDE SEQUENCE [MRNA]</scope>
    <source>
        <strain>Northern Balkan</strain>
        <tissue>Venom gland</tissue>
    </source>
</reference>
<reference key="2">
    <citation type="journal article" date="1985" name="Biochim. Biophys. Acta">
        <title>Ammodytoxin A, a highly lethal phospholipase A2 from Vipera ammodytes ammodytes venom.</title>
        <authorList>
            <person name="Ritonja A."/>
            <person name="Gubensek F."/>
        </authorList>
    </citation>
    <scope>PROTEIN SEQUENCE OF 17-138</scope>
    <scope>FUNCTION</scope>
    <source>
        <strain>Northern Balkan</strain>
        <tissue>Venom</tissue>
    </source>
</reference>
<reference key="3">
    <citation type="journal article" date="1999" name="Biochem. J.">
        <title>An aromatic, but not a basic, residue is involved in the toxicity of group-II phospholipase A2 neurotoxins.</title>
        <authorList>
            <person name="Pungercar J."/>
            <person name="Krizaj I."/>
            <person name="Liang N.-S."/>
            <person name="Gubensek F."/>
        </authorList>
    </citation>
    <scope>MUTAGENESIS OF LYS-114; LYS-117 AND LYS-133</scope>
    <scope>TOXIC DOSE</scope>
</reference>
<reference key="4">
    <citation type="journal article" date="2000" name="Biochem. Biophys. Res. Commun.">
        <title>The amino acid region 115-119 of ammodytoxins plays an important role in neurotoxicity.</title>
        <authorList>
            <person name="Ivanovski G."/>
            <person name="Copic A."/>
            <person name="Krizaj I."/>
            <person name="Gubensek F."/>
            <person name="Pungercar J."/>
        </authorList>
    </citation>
    <scope>CATALYTIC ACTIVITY</scope>
    <scope>MUTAGENESIS OF 121-TYR-ILE-122 AND 121-TYR--ASN-125</scope>
</reference>
<reference key="5">
    <citation type="journal article" date="2000" name="Biochem. J.">
        <title>Charge reversal of ammodytoxin A, a phospholipase A2-toxin, does not abolish its neurotoxicity.</title>
        <authorList>
            <person name="Prijatelj P."/>
            <person name="Copic A."/>
            <person name="Krizaj I."/>
            <person name="Gubensek F."/>
            <person name="Pungercar J."/>
        </authorList>
    </citation>
    <scope>MUTAGENESIS OF LYS-114; LYS-117 AND 132-LYS--LYS-137</scope>
</reference>
<reference key="6">
    <citation type="journal article" date="2001" name="Toxicon">
        <title>The facilitatory actions of snake venom phospholipase A(2) neurotoxins at the neuromuscular junction are not mediated through voltage-gated K(+) channels.</title>
        <authorList>
            <person name="Fathi B."/>
            <person name="Rowan E.G."/>
            <person name="Harvey A.L."/>
        </authorList>
    </citation>
    <scope>FUNCTION</scope>
</reference>
<reference key="7">
    <citation type="journal article" date="2002" name="Biochem. J.">
        <title>Phenylalanine-24 in the N-terminal region of ammodytoxins is important for both enzymic activity and presynaptic toxicity.</title>
        <authorList>
            <person name="Petan T."/>
            <person name="Krizaj I."/>
            <person name="Gubensek F."/>
            <person name="Pungercar J."/>
        </authorList>
    </citation>
    <scope>CATALYTIC ACTIVITY</scope>
    <scope>MUTAGENESIS OF PHE-39</scope>
    <scope>TOXIC DOSE</scope>
</reference>
<reference key="8">
    <citation type="journal article" date="2002" name="Eur. J. Biochem.">
        <title>The C-terminal region of ammodytoxins is important but not sufficient for neurotoxicity.</title>
        <authorList>
            <person name="Prijatelj P."/>
            <person name="Krizaj I."/>
            <person name="Kralj B."/>
            <person name="Gubensek F."/>
            <person name="Pungercar J."/>
        </authorList>
    </citation>
    <scope>AMI2-ATXA CHIMERA</scope>
</reference>
<reference key="9">
    <citation type="journal article" date="2003" name="Eur. J. Biochem.">
        <title>Identification of a novel binding site for calmodulin in ammodytoxin A, a neurotoxic group IIA phospholipase A2.</title>
        <authorList>
            <person name="Prijatelj P."/>
            <person name="Sribar J."/>
            <person name="Ivanovski G."/>
            <person name="Krizaj I."/>
            <person name="Gubensek F."/>
            <person name="Pungercar J."/>
        </authorList>
    </citation>
    <scope>CALMODULIN-BINDING</scope>
    <scope>MUTAGENESIS OF LYS-114; LYS-117; 121-TYR-ILE-122; 121-TYR--ASN-125 AND 132-LYS--LYS-137</scope>
</reference>
<reference key="10">
    <citation type="journal article" date="2004" name="Biochem. Biophys. Res. Commun.">
        <title>Ammodytoxin, a neurotoxic secreted phospholipase A(2), can act in the cytosol of the nerve cell.</title>
        <authorList>
            <person name="Petrovic U."/>
            <person name="Sribar J."/>
            <person name="Paris A."/>
            <person name="Rupnik M."/>
            <person name="Krzan M."/>
            <person name="Vardjan N."/>
            <person name="Gubensek F."/>
            <person name="Zorec R."/>
            <person name="Krizaj I."/>
        </authorList>
    </citation>
    <scope>FUNCTION</scope>
</reference>
<reference key="11">
    <citation type="journal article" date="2004" name="Biochim. Biophys. Acta">
        <title>Basic amino acid residues in the beta-structure region contribute, but not critically, to presynaptic neurotoxicity of ammodytoxin A.</title>
        <authorList>
            <person name="Ivanovski G."/>
            <person name="Petan T."/>
            <person name="Krizaj I."/>
            <person name="Gelb M.H."/>
            <person name="Gubensek F."/>
            <person name="Pungercar J."/>
        </authorList>
    </citation>
    <scope>CATALYTIC ACTIVITY</scope>
    <scope>MUTAGENESIS OF ARG-79; 81-LYS--ARG-84 AND LYS-93</scope>
    <scope>TOXIC DOSE</scope>
</reference>
<reference key="12">
    <citation type="journal article" date="2005" name="Biochemistry">
        <title>Ammodytoxins, potent presynaptic neurotoxins, are also highly efficient phospholipase A2 enzymes.</title>
        <authorList>
            <person name="Petan T."/>
            <person name="Krizaj I."/>
            <person name="Gelb M.H."/>
            <person name="Pungercar J."/>
        </authorList>
    </citation>
    <scope>CATALYTIC ACTIVITY</scope>
    <scope>COFACTOR</scope>
    <scope>SITE</scope>
    <scope>MUTAGENESIS OF PHE-39; VAL-46 AND 121-TYR--ASN-125</scope>
    <source>
        <tissue>Venom</tissue>
    </source>
</reference>
<reference key="13">
    <citation type="journal article" date="2006" name="Biochimie">
        <title>The C-terminal and beta-wing regions of ammodytoxin A, a neurotoxic phospholipase A2 from Vipera ammodytes ammodytes, are critical for binding to factor Xa and for anticoagulant effect.</title>
        <authorList>
            <person name="Prijatelj P."/>
            <person name="Charnay M."/>
            <person name="Ivanovski G."/>
            <person name="Jenko Z."/>
            <person name="Pungercar J."/>
            <person name="Krizaj I."/>
            <person name="Faure G."/>
        </authorList>
    </citation>
    <scope>FUNCTION</scope>
    <scope>BINDING TO COAGULATION FACTOR X (F10)</scope>
    <scope>MUTAGENESIS OF ARG-79; 81-LYS--ARG-84; LYS-114; LYS-117; 121-TYR--ASN-125; LYS-132; LYS-133 AND 132-LYS--LYS-137</scope>
</reference>
<reference key="14">
    <citation type="journal article" date="2006" name="Biochimie">
        <title>Binding to the high-affinity M-type receptor for secreted phospholipases A(2) is not obligatory for the presynaptic neurotoxicity of ammodytoxin A.</title>
        <authorList>
            <person name="Prijatelj P."/>
            <person name="Vardjan N."/>
            <person name="Rowan E.G."/>
            <person name="Krizaj I."/>
            <person name="Pungercar J."/>
        </authorList>
    </citation>
    <scope>FUNCTION</scope>
    <scope>BINDING TO M-TYPE PLA2 RECEPTOR (R-180)</scope>
</reference>
<reference key="15">
    <citation type="journal article" date="2008" name="Biochim. Biophys. Acta">
        <title>A presynaptically toxic secreted phospholipase A2 is internalized into motoneuron-like cells where it is rapidly translocated into the cytosol.</title>
        <authorList>
            <person name="Praznikar Z.J."/>
            <person name="Kovacic L."/>
            <person name="Rowan E.G."/>
            <person name="Romih R."/>
            <person name="Rusmini P."/>
            <person name="Poletti A."/>
            <person name="Krizaj I."/>
            <person name="Pungercar J."/>
        </authorList>
    </citation>
    <scope>SUBCELLULAR LOCATION</scope>
</reference>
<reference key="16">
    <citation type="journal article" date="2011" name="Toxicon">
        <title>Ammodytoxin: a window into understanding presynaptic toxicity of secreted phospholipases A(2) and more.</title>
        <authorList>
            <person name="Krizaj I."/>
        </authorList>
    </citation>
    <scope>REVIEW</scope>
</reference>
<reference key="17">
    <citation type="journal article" date="2010" name="J. Struct. Biol.">
        <title>Comparative structural studies of two natural isoforms of ammodytoxin, phospholipases A2 from Vipera ammodytes ammodytes which differ in neurotoxicity and anticoagulant activity.</title>
        <authorList>
            <person name="Saul F.A."/>
            <person name="Prijatelj-Znidarsic P."/>
            <person name="Vulliez-le Normand B."/>
            <person name="Villette B."/>
            <person name="Raynal B."/>
            <person name="Pungercar J."/>
            <person name="Krizaj I."/>
            <person name="Faure G."/>
        </authorList>
    </citation>
    <scope>X-RAY CRYSTALLOGRAPHY (1.7 ANGSTROMS) OF 17-138</scope>
    <scope>DISULFIDE BONDS</scope>
</reference>
<organism>
    <name type="scientific">Vipera ammodytes ammodytes</name>
    <name type="common">Western sand viper</name>
    <dbReference type="NCBI Taxonomy" id="8705"/>
    <lineage>
        <taxon>Eukaryota</taxon>
        <taxon>Metazoa</taxon>
        <taxon>Chordata</taxon>
        <taxon>Craniata</taxon>
        <taxon>Vertebrata</taxon>
        <taxon>Euteleostomi</taxon>
        <taxon>Lepidosauria</taxon>
        <taxon>Squamata</taxon>
        <taxon>Bifurcata</taxon>
        <taxon>Unidentata</taxon>
        <taxon>Episquamata</taxon>
        <taxon>Toxicofera</taxon>
        <taxon>Serpentes</taxon>
        <taxon>Colubroidea</taxon>
        <taxon>Viperidae</taxon>
        <taxon>Viperinae</taxon>
        <taxon>Vipera</taxon>
    </lineage>
</organism>
<dbReference type="EC" id="3.1.1.4"/>
<dbReference type="EMBL" id="X53471">
    <property type="protein sequence ID" value="CAA37567.1"/>
    <property type="molecule type" value="mRNA"/>
</dbReference>
<dbReference type="PIR" id="A39561">
    <property type="entry name" value="PSVIAA"/>
</dbReference>
<dbReference type="PDB" id="3G8G">
    <property type="method" value="X-ray"/>
    <property type="resolution" value="1.70 A"/>
    <property type="chains" value="A=17-138"/>
</dbReference>
<dbReference type="PDBsum" id="3G8G"/>
<dbReference type="SMR" id="P00626"/>
<dbReference type="EvolutionaryTrace" id="P00626"/>
<dbReference type="GO" id="GO:0005576">
    <property type="term" value="C:extracellular region"/>
    <property type="evidence" value="ECO:0007669"/>
    <property type="project" value="UniProtKB-SubCell"/>
</dbReference>
<dbReference type="GO" id="GO:0005509">
    <property type="term" value="F:calcium ion binding"/>
    <property type="evidence" value="ECO:0007669"/>
    <property type="project" value="InterPro"/>
</dbReference>
<dbReference type="GO" id="GO:0047498">
    <property type="term" value="F:calcium-dependent phospholipase A2 activity"/>
    <property type="evidence" value="ECO:0007669"/>
    <property type="project" value="TreeGrafter"/>
</dbReference>
<dbReference type="GO" id="GO:0005543">
    <property type="term" value="F:phospholipid binding"/>
    <property type="evidence" value="ECO:0007669"/>
    <property type="project" value="TreeGrafter"/>
</dbReference>
<dbReference type="GO" id="GO:0090729">
    <property type="term" value="F:toxin activity"/>
    <property type="evidence" value="ECO:0007669"/>
    <property type="project" value="UniProtKB-KW"/>
</dbReference>
<dbReference type="GO" id="GO:0050482">
    <property type="term" value="P:arachidonate secretion"/>
    <property type="evidence" value="ECO:0007669"/>
    <property type="project" value="InterPro"/>
</dbReference>
<dbReference type="GO" id="GO:0016042">
    <property type="term" value="P:lipid catabolic process"/>
    <property type="evidence" value="ECO:0007669"/>
    <property type="project" value="UniProtKB-KW"/>
</dbReference>
<dbReference type="GO" id="GO:0042130">
    <property type="term" value="P:negative regulation of T cell proliferation"/>
    <property type="evidence" value="ECO:0007669"/>
    <property type="project" value="TreeGrafter"/>
</dbReference>
<dbReference type="GO" id="GO:0006644">
    <property type="term" value="P:phospholipid metabolic process"/>
    <property type="evidence" value="ECO:0007669"/>
    <property type="project" value="InterPro"/>
</dbReference>
<dbReference type="CDD" id="cd00125">
    <property type="entry name" value="PLA2c"/>
    <property type="match status" value="1"/>
</dbReference>
<dbReference type="FunFam" id="1.20.90.10:FF:000001">
    <property type="entry name" value="Basic phospholipase A2 homolog"/>
    <property type="match status" value="1"/>
</dbReference>
<dbReference type="Gene3D" id="1.20.90.10">
    <property type="entry name" value="Phospholipase A2 domain"/>
    <property type="match status" value="1"/>
</dbReference>
<dbReference type="InterPro" id="IPR001211">
    <property type="entry name" value="PLipase_A2"/>
</dbReference>
<dbReference type="InterPro" id="IPR033112">
    <property type="entry name" value="PLipase_A2_Asp_AS"/>
</dbReference>
<dbReference type="InterPro" id="IPR016090">
    <property type="entry name" value="PLipase_A2_dom"/>
</dbReference>
<dbReference type="InterPro" id="IPR036444">
    <property type="entry name" value="PLipase_A2_dom_sf"/>
</dbReference>
<dbReference type="InterPro" id="IPR033113">
    <property type="entry name" value="PLipase_A2_His_AS"/>
</dbReference>
<dbReference type="PANTHER" id="PTHR11716">
    <property type="entry name" value="PHOSPHOLIPASE A2 FAMILY MEMBER"/>
    <property type="match status" value="1"/>
</dbReference>
<dbReference type="PANTHER" id="PTHR11716:SF9">
    <property type="entry name" value="PHOSPHOLIPASE A2, MEMBRANE ASSOCIATED"/>
    <property type="match status" value="1"/>
</dbReference>
<dbReference type="Pfam" id="PF00068">
    <property type="entry name" value="Phospholip_A2_1"/>
    <property type="match status" value="1"/>
</dbReference>
<dbReference type="PRINTS" id="PR00389">
    <property type="entry name" value="PHPHLIPASEA2"/>
</dbReference>
<dbReference type="SMART" id="SM00085">
    <property type="entry name" value="PA2c"/>
    <property type="match status" value="1"/>
</dbReference>
<dbReference type="SUPFAM" id="SSF48619">
    <property type="entry name" value="Phospholipase A2, PLA2"/>
    <property type="match status" value="1"/>
</dbReference>
<dbReference type="PROSITE" id="PS00119">
    <property type="entry name" value="PA2_ASP"/>
    <property type="match status" value="1"/>
</dbReference>
<dbReference type="PROSITE" id="PS00118">
    <property type="entry name" value="PA2_HIS"/>
    <property type="match status" value="1"/>
</dbReference>